<accession>Q3SZU4</accession>
<reference key="1">
    <citation type="journal article" date="2005" name="BMC Genomics">
        <title>Characterization of 954 bovine full-CDS cDNA sequences.</title>
        <authorList>
            <person name="Harhay G.P."/>
            <person name="Sonstegard T.S."/>
            <person name="Keele J.W."/>
            <person name="Heaton M.P."/>
            <person name="Clawson M.L."/>
            <person name="Snelling W.M."/>
            <person name="Wiedmann R.T."/>
            <person name="Van Tassell C.P."/>
            <person name="Smith T.P.L."/>
        </authorList>
    </citation>
    <scope>NUCLEOTIDE SEQUENCE [LARGE SCALE MRNA]</scope>
</reference>
<reference key="2">
    <citation type="submission" date="2005-08" db="EMBL/GenBank/DDBJ databases">
        <authorList>
            <consortium name="NIH - Mammalian Gene Collection (MGC) project"/>
        </authorList>
    </citation>
    <scope>NUCLEOTIDE SEQUENCE [LARGE SCALE MRNA]</scope>
    <source>
        <strain>Crossbred X Angus</strain>
        <tissue>Liver</tissue>
    </source>
</reference>
<organism>
    <name type="scientific">Bos taurus</name>
    <name type="common">Bovine</name>
    <dbReference type="NCBI Taxonomy" id="9913"/>
    <lineage>
        <taxon>Eukaryota</taxon>
        <taxon>Metazoa</taxon>
        <taxon>Chordata</taxon>
        <taxon>Craniata</taxon>
        <taxon>Vertebrata</taxon>
        <taxon>Euteleostomi</taxon>
        <taxon>Mammalia</taxon>
        <taxon>Eutheria</taxon>
        <taxon>Laurasiatheria</taxon>
        <taxon>Artiodactyla</taxon>
        <taxon>Ruminantia</taxon>
        <taxon>Pecora</taxon>
        <taxon>Bovidae</taxon>
        <taxon>Bovinae</taxon>
        <taxon>Bos</taxon>
    </lineage>
</organism>
<protein>
    <recommendedName>
        <fullName>Cysteine dioxygenase type 1</fullName>
        <ecNumber evidence="2">1.13.11.20</ecNumber>
    </recommendedName>
    <alternativeName>
        <fullName>Cysteine dioxygenase type I</fullName>
        <shortName>CDO</shortName>
        <shortName>CDO-I</shortName>
    </alternativeName>
</protein>
<feature type="chain" id="PRO_0000246081" description="Cysteine dioxygenase type 1">
    <location>
        <begin position="1"/>
        <end position="200"/>
    </location>
</feature>
<feature type="binding site" evidence="2">
    <location>
        <position position="86"/>
    </location>
    <ligand>
        <name>Fe cation</name>
        <dbReference type="ChEBI" id="CHEBI:24875"/>
        <note>catalytic</note>
    </ligand>
</feature>
<feature type="binding site" evidence="2">
    <location>
        <position position="88"/>
    </location>
    <ligand>
        <name>Fe cation</name>
        <dbReference type="ChEBI" id="CHEBI:24875"/>
        <note>catalytic</note>
    </ligand>
</feature>
<feature type="binding site" evidence="2">
    <location>
        <position position="140"/>
    </location>
    <ligand>
        <name>Fe cation</name>
        <dbReference type="ChEBI" id="CHEBI:24875"/>
        <note>catalytic</note>
    </ligand>
</feature>
<feature type="cross-link" description="3'-(S-cysteinyl)-tyrosine (Cys-Tyr)" evidence="2">
    <location>
        <begin position="93"/>
        <end position="157"/>
    </location>
</feature>
<proteinExistence type="evidence at transcript level"/>
<name>CDO1_BOVIN</name>
<keyword id="KW-0223">Dioxygenase</keyword>
<keyword id="KW-0408">Iron</keyword>
<keyword id="KW-0479">Metal-binding</keyword>
<keyword id="KW-0560">Oxidoreductase</keyword>
<keyword id="KW-1185">Reference proteome</keyword>
<keyword id="KW-0883">Thioether bond</keyword>
<gene>
    <name type="primary">CDO1</name>
</gene>
<dbReference type="EC" id="1.13.11.20" evidence="2"/>
<dbReference type="EMBL" id="BT025474">
    <property type="protein sequence ID" value="ABF57430.1"/>
    <property type="molecule type" value="mRNA"/>
</dbReference>
<dbReference type="EMBL" id="BC102709">
    <property type="protein sequence ID" value="AAI02710.1"/>
    <property type="molecule type" value="mRNA"/>
</dbReference>
<dbReference type="RefSeq" id="NP_001029637.1">
    <property type="nucleotide sequence ID" value="NM_001034465.2"/>
</dbReference>
<dbReference type="SMR" id="Q3SZU4"/>
<dbReference type="FunCoup" id="Q3SZU4">
    <property type="interactions" value="62"/>
</dbReference>
<dbReference type="STRING" id="9913.ENSBTAP00000023186"/>
<dbReference type="PaxDb" id="9913-ENSBTAP00000023186"/>
<dbReference type="Ensembl" id="ENSBTAT00000023186.7">
    <property type="protein sequence ID" value="ENSBTAP00000023186.7"/>
    <property type="gene ID" value="ENSBTAG00000017442.7"/>
</dbReference>
<dbReference type="GeneID" id="514462"/>
<dbReference type="KEGG" id="bta:514462"/>
<dbReference type="CTD" id="1036"/>
<dbReference type="VGNC" id="VGNC:27150">
    <property type="gene designation" value="CDO1"/>
</dbReference>
<dbReference type="eggNOG" id="KOG4064">
    <property type="taxonomic scope" value="Eukaryota"/>
</dbReference>
<dbReference type="GeneTree" id="ENSGT00390000018226"/>
<dbReference type="InParanoid" id="Q3SZU4"/>
<dbReference type="OrthoDB" id="543511at2759"/>
<dbReference type="UniPathway" id="UPA00012">
    <property type="reaction ID" value="UER00537"/>
</dbReference>
<dbReference type="Proteomes" id="UP000009136">
    <property type="component" value="Chromosome 10"/>
</dbReference>
<dbReference type="GO" id="GO:0005829">
    <property type="term" value="C:cytosol"/>
    <property type="evidence" value="ECO:0007669"/>
    <property type="project" value="Ensembl"/>
</dbReference>
<dbReference type="GO" id="GO:0017172">
    <property type="term" value="F:cysteine dioxygenase activity"/>
    <property type="evidence" value="ECO:0000250"/>
    <property type="project" value="UniProtKB"/>
</dbReference>
<dbReference type="GO" id="GO:0008198">
    <property type="term" value="F:ferrous iron binding"/>
    <property type="evidence" value="ECO:0000250"/>
    <property type="project" value="UniProtKB"/>
</dbReference>
<dbReference type="GO" id="GO:0016151">
    <property type="term" value="F:nickel cation binding"/>
    <property type="evidence" value="ECO:0000250"/>
    <property type="project" value="UniProtKB"/>
</dbReference>
<dbReference type="GO" id="GO:0008270">
    <property type="term" value="F:zinc ion binding"/>
    <property type="evidence" value="ECO:0000250"/>
    <property type="project" value="UniProtKB"/>
</dbReference>
<dbReference type="GO" id="GO:0019448">
    <property type="term" value="P:L-cysteine catabolic process"/>
    <property type="evidence" value="ECO:0000318"/>
    <property type="project" value="GO_Central"/>
</dbReference>
<dbReference type="GO" id="GO:0042412">
    <property type="term" value="P:taurine biosynthetic process"/>
    <property type="evidence" value="ECO:0007669"/>
    <property type="project" value="UniProtKB-UniPathway"/>
</dbReference>
<dbReference type="CDD" id="cd10548">
    <property type="entry name" value="cupin_CDO"/>
    <property type="match status" value="1"/>
</dbReference>
<dbReference type="FunFam" id="2.60.120.10:FF:000045">
    <property type="entry name" value="Cysteine dioxygenase 1"/>
    <property type="match status" value="1"/>
</dbReference>
<dbReference type="Gene3D" id="2.60.120.10">
    <property type="entry name" value="Jelly Rolls"/>
    <property type="match status" value="1"/>
</dbReference>
<dbReference type="InterPro" id="IPR010300">
    <property type="entry name" value="CDO_1"/>
</dbReference>
<dbReference type="InterPro" id="IPR014710">
    <property type="entry name" value="RmlC-like_jellyroll"/>
</dbReference>
<dbReference type="InterPro" id="IPR011051">
    <property type="entry name" value="RmlC_Cupin_sf"/>
</dbReference>
<dbReference type="PANTHER" id="PTHR12918">
    <property type="entry name" value="CYSTEINE DIOXYGENASE"/>
    <property type="match status" value="1"/>
</dbReference>
<dbReference type="PANTHER" id="PTHR12918:SF1">
    <property type="entry name" value="CYSTEINE DIOXYGENASE TYPE 1"/>
    <property type="match status" value="1"/>
</dbReference>
<dbReference type="Pfam" id="PF05995">
    <property type="entry name" value="CDO_I"/>
    <property type="match status" value="1"/>
</dbReference>
<dbReference type="SUPFAM" id="SSF51182">
    <property type="entry name" value="RmlC-like cupins"/>
    <property type="match status" value="1"/>
</dbReference>
<evidence type="ECO:0000250" key="1">
    <source>
        <dbReference type="UniProtKB" id="P60334"/>
    </source>
</evidence>
<evidence type="ECO:0000250" key="2">
    <source>
        <dbReference type="UniProtKB" id="Q16878"/>
    </source>
</evidence>
<evidence type="ECO:0000305" key="3"/>
<comment type="function">
    <text evidence="2">Catalyzes the oxidation of cysteine to cysteine sulfinic acid with addition of molecular dioxygen.</text>
</comment>
<comment type="catalytic activity">
    <reaction evidence="2">
        <text>L-cysteine + O2 = 3-sulfino-L-alanine + H(+)</text>
        <dbReference type="Rhea" id="RHEA:20441"/>
        <dbReference type="ChEBI" id="CHEBI:15378"/>
        <dbReference type="ChEBI" id="CHEBI:15379"/>
        <dbReference type="ChEBI" id="CHEBI:35235"/>
        <dbReference type="ChEBI" id="CHEBI:61085"/>
        <dbReference type="EC" id="1.13.11.20"/>
    </reaction>
    <physiologicalReaction direction="left-to-right" evidence="2">
        <dbReference type="Rhea" id="RHEA:20442"/>
    </physiologicalReaction>
</comment>
<comment type="cofactor">
    <cofactor evidence="1">
        <name>Fe cation</name>
        <dbReference type="ChEBI" id="CHEBI:24875"/>
    </cofactor>
    <cofactor evidence="1">
        <name>Ni(2+)</name>
        <dbReference type="ChEBI" id="CHEBI:49786"/>
    </cofactor>
    <cofactor evidence="1">
        <name>Zn(2+)</name>
        <dbReference type="ChEBI" id="CHEBI:29105"/>
    </cofactor>
    <text evidence="1">Binds 1 Fe cation per subunit. Ni(2+) and Zn(2+) can be used to a lesser extent.</text>
</comment>
<comment type="pathway">
    <text>Organosulfur biosynthesis; taurine biosynthesis; hypotaurine from L-cysteine: step 1/2.</text>
</comment>
<comment type="subunit">
    <text evidence="2">Monomer.</text>
</comment>
<comment type="PTM">
    <text evidence="2">The thioether cross-link between Cys-93 and Tyr-157 plays a structural role through stabilizing the Fe(2+) ion, and prevents the production of highly damaging free hydroxyl radicals by holding the oxygen radical via hydroxyl hydrogen.</text>
</comment>
<comment type="similarity">
    <text evidence="3">Belongs to the cysteine dioxygenase family.</text>
</comment>
<sequence>MERTEVLKPRTLADLIRVLHQLFAGEEINVEEVQAVMEAYESNPAEWAVYAKFDQYRYTRNLVDQGNGKFNLMILCWGEGHGSSIHDHTDSHCFLKMLQGNLKETLFAWPDKKSNEMIKKSERILRENQCAYINDSIGLHRVENISHTEPAVSLHLYSPPFDTCHAFDQRTGHKNKVIMTFHSKFGIKTPFTTSGSLENN</sequence>